<dbReference type="EMBL" id="L20834">
    <property type="status" value="NOT_ANNOTATED_CDS"/>
    <property type="molecule type" value="Genomic_DNA"/>
</dbReference>
<dbReference type="EMBL" id="L28105">
    <property type="protein sequence ID" value="AAC36923.1"/>
    <property type="molecule type" value="Genomic_DNA"/>
</dbReference>
<dbReference type="EMBL" id="U00096">
    <property type="protein sequence ID" value="AAC73219.1"/>
    <property type="molecule type" value="Genomic_DNA"/>
</dbReference>
<dbReference type="EMBL" id="AP009048">
    <property type="protein sequence ID" value="BAB96678.2"/>
    <property type="molecule type" value="Genomic_DNA"/>
</dbReference>
<dbReference type="PIR" id="D64733">
    <property type="entry name" value="D64733"/>
</dbReference>
<dbReference type="RefSeq" id="NP_414650.1">
    <property type="nucleotide sequence ID" value="NC_000913.3"/>
</dbReference>
<dbReference type="RefSeq" id="WP_000360904.1">
    <property type="nucleotide sequence ID" value="NZ_SSZK01000004.1"/>
</dbReference>
<dbReference type="BMRB" id="P36647"/>
<dbReference type="SMR" id="P36647"/>
<dbReference type="BioGRID" id="4259343">
    <property type="interactions" value="5"/>
</dbReference>
<dbReference type="FunCoup" id="P36647">
    <property type="interactions" value="53"/>
</dbReference>
<dbReference type="STRING" id="511145.b0108"/>
<dbReference type="PaxDb" id="511145-b0108"/>
<dbReference type="EnsemblBacteria" id="AAC73219">
    <property type="protein sequence ID" value="AAC73219"/>
    <property type="gene ID" value="b0108"/>
</dbReference>
<dbReference type="GeneID" id="945817"/>
<dbReference type="KEGG" id="ecj:JW0104"/>
<dbReference type="KEGG" id="eco:b0108"/>
<dbReference type="KEGG" id="ecoc:C3026_00440"/>
<dbReference type="PATRIC" id="fig|1411691.4.peg.2174"/>
<dbReference type="EchoBASE" id="EB2031"/>
<dbReference type="eggNOG" id="COG4969">
    <property type="taxonomic scope" value="Bacteria"/>
</dbReference>
<dbReference type="HOGENOM" id="CLU_091705_4_1_6"/>
<dbReference type="InParanoid" id="P36647"/>
<dbReference type="OMA" id="IPAYQGY"/>
<dbReference type="OrthoDB" id="5918848at2"/>
<dbReference type="PhylomeDB" id="P36647"/>
<dbReference type="BioCyc" id="EcoCyc:EG12107-MONOMER"/>
<dbReference type="PRO" id="PR:P36647"/>
<dbReference type="Proteomes" id="UP000000625">
    <property type="component" value="Chromosome"/>
</dbReference>
<dbReference type="GO" id="GO:0016020">
    <property type="term" value="C:membrane"/>
    <property type="evidence" value="ECO:0007669"/>
    <property type="project" value="UniProtKB-SubCell"/>
</dbReference>
<dbReference type="GO" id="GO:0044096">
    <property type="term" value="C:type IV pilus"/>
    <property type="evidence" value="ECO:0000318"/>
    <property type="project" value="GO_Central"/>
</dbReference>
<dbReference type="GO" id="GO:0043107">
    <property type="term" value="P:type IV pilus-dependent motility"/>
    <property type="evidence" value="ECO:0000318"/>
    <property type="project" value="GO_Central"/>
</dbReference>
<dbReference type="Gene3D" id="3.30.700.10">
    <property type="entry name" value="Glycoprotein, Type 4 Pilin"/>
    <property type="match status" value="1"/>
</dbReference>
<dbReference type="InterPro" id="IPR012902">
    <property type="entry name" value="N_methyl_site"/>
</dbReference>
<dbReference type="InterPro" id="IPR045584">
    <property type="entry name" value="Pilin-like"/>
</dbReference>
<dbReference type="InterPro" id="IPR050470">
    <property type="entry name" value="T4P/T2SS_Core"/>
</dbReference>
<dbReference type="NCBIfam" id="TIGR02532">
    <property type="entry name" value="IV_pilin_GFxxxE"/>
    <property type="match status" value="1"/>
</dbReference>
<dbReference type="NCBIfam" id="NF007862">
    <property type="entry name" value="PRK10574.1"/>
    <property type="match status" value="1"/>
</dbReference>
<dbReference type="PANTHER" id="PTHR30093">
    <property type="entry name" value="GENERAL SECRETION PATHWAY PROTEIN G"/>
    <property type="match status" value="1"/>
</dbReference>
<dbReference type="PANTHER" id="PTHR30093:SF34">
    <property type="entry name" value="PREPILIN PEPTIDASE-DEPENDENT PROTEIN D"/>
    <property type="match status" value="1"/>
</dbReference>
<dbReference type="Pfam" id="PF07963">
    <property type="entry name" value="N_methyl"/>
    <property type="match status" value="1"/>
</dbReference>
<dbReference type="SUPFAM" id="SSF54523">
    <property type="entry name" value="Pili subunits"/>
    <property type="match status" value="1"/>
</dbReference>
<dbReference type="PROSITE" id="PS00409">
    <property type="entry name" value="PROKAR_NTER_METHYL"/>
    <property type="match status" value="1"/>
</dbReference>
<comment type="function">
    <text evidence="3">Major component of the type IV pilus (T4P) that plays a role in cell adhesion and motility. Not produced when grown under standard laboratory conditions.</text>
</comment>
<comment type="subcellular location">
    <subcellularLocation>
        <location>Fimbrium</location>
    </subcellularLocation>
    <subcellularLocation>
        <location evidence="1">Membrane</location>
        <topology evidence="1">Single-pass membrane protein</topology>
    </subcellularLocation>
</comment>
<comment type="similarity">
    <text evidence="4">Belongs to the N-Me-Phe pilin family.</text>
</comment>
<reference key="1">
    <citation type="submission" date="1993-11" db="EMBL/GenBank/DDBJ databases">
        <authorList>
            <person name="Bhatia R.S."/>
        </authorList>
    </citation>
    <scope>PRELIMINARY NUCLEOTIDE SEQUENCE [GENOMIC DNA]</scope>
    <source>
        <strain>K12</strain>
    </source>
</reference>
<reference key="2">
    <citation type="journal article" date="1994" name="Gene">
        <title>Escherichia coli contains a set of genes homologous to those involved in protein secretion, DNA uptake and the assembly of type-4 fimbriae in other bacteria.</title>
        <authorList>
            <person name="Whitchurch C.B."/>
            <person name="Mattick J.S."/>
        </authorList>
    </citation>
    <scope>NUCLEOTIDE SEQUENCE [GENOMIC DNA]</scope>
    <source>
        <strain>K12</strain>
    </source>
</reference>
<reference key="3">
    <citation type="journal article" date="1994" name="Nucleic Acids Res.">
        <title>Systematic sequencing of the Escherichia coli genome: analysis of the 2.4-4.1 min (110,917-193,643 bp) region.</title>
        <authorList>
            <person name="Fujita N."/>
            <person name="Mori H."/>
            <person name="Yura T."/>
            <person name="Ishihama A."/>
        </authorList>
    </citation>
    <scope>NUCLEOTIDE SEQUENCE [LARGE SCALE GENOMIC DNA]</scope>
    <source>
        <strain>K12 / W3110 / ATCC 27325 / DSM 5911</strain>
    </source>
</reference>
<reference key="4">
    <citation type="journal article" date="1997" name="Science">
        <title>The complete genome sequence of Escherichia coli K-12.</title>
        <authorList>
            <person name="Blattner F.R."/>
            <person name="Plunkett G. III"/>
            <person name="Bloch C.A."/>
            <person name="Perna N.T."/>
            <person name="Burland V."/>
            <person name="Riley M."/>
            <person name="Collado-Vides J."/>
            <person name="Glasner J.D."/>
            <person name="Rode C.K."/>
            <person name="Mayhew G.F."/>
            <person name="Gregor J."/>
            <person name="Davis N.W."/>
            <person name="Kirkpatrick H.A."/>
            <person name="Goeden M.A."/>
            <person name="Rose D.J."/>
            <person name="Mau B."/>
            <person name="Shao Y."/>
        </authorList>
    </citation>
    <scope>NUCLEOTIDE SEQUENCE [LARGE SCALE GENOMIC DNA]</scope>
    <source>
        <strain>K12 / MG1655 / ATCC 47076</strain>
    </source>
</reference>
<reference key="5">
    <citation type="journal article" date="2006" name="Mol. Syst. Biol.">
        <title>Highly accurate genome sequences of Escherichia coli K-12 strains MG1655 and W3110.</title>
        <authorList>
            <person name="Hayashi K."/>
            <person name="Morooka N."/>
            <person name="Yamamoto Y."/>
            <person name="Fujita K."/>
            <person name="Isono K."/>
            <person name="Choi S."/>
            <person name="Ohtsubo E."/>
            <person name="Baba T."/>
            <person name="Wanner B.L."/>
            <person name="Mori H."/>
            <person name="Horiuchi T."/>
        </authorList>
    </citation>
    <scope>NUCLEOTIDE SEQUENCE [LARGE SCALE GENOMIC DNA]</scope>
    <scope>SEQUENCE REVISION TO 1-5</scope>
    <source>
        <strain>K12 / W3110 / ATCC 27325 / DSM 5911</strain>
    </source>
</reference>
<reference key="6">
    <citation type="journal article" date="2000" name="J. Bacteriol.">
        <title>PpdD type IV pilin of Escherichia coli K-12 can Be assembled into pili in Pseudomonas aeruginosa.</title>
        <authorList>
            <person name="Sauvonnet N."/>
            <person name="Gounon P."/>
            <person name="Pugsley A.P."/>
        </authorList>
    </citation>
    <scope>FUNCTION</scope>
    <scope>PROTEOLYTIC CLEAVAGE</scope>
    <source>
        <strain>K12</strain>
    </source>
</reference>
<feature type="propeptide" id="PRO_0000024280" description="Leader sequence" evidence="2 3">
    <location>
        <begin position="1"/>
        <end position="6"/>
    </location>
</feature>
<feature type="chain" id="PRO_0000024281" description="Prepilin peptidase-dependent protein D">
    <location>
        <begin position="7"/>
        <end position="146"/>
    </location>
</feature>
<feature type="transmembrane region" description="Helical" evidence="1">
    <location>
        <begin position="7"/>
        <end position="27"/>
    </location>
</feature>
<feature type="modified residue" description="N-methylphenylalanine" evidence="2">
    <location>
        <position position="7"/>
    </location>
</feature>
<feature type="sequence conflict" description="In Ref. 3." evidence="4" ref="3">
    <original>MDKQR</original>
    <variation>DGQAT</variation>
    <location>
        <begin position="1"/>
        <end position="5"/>
    </location>
</feature>
<accession>P36647</accession>
<accession>Q8KMZ6</accession>
<evidence type="ECO:0000255" key="1"/>
<evidence type="ECO:0000255" key="2">
    <source>
        <dbReference type="PROSITE-ProRule" id="PRU01070"/>
    </source>
</evidence>
<evidence type="ECO:0000269" key="3">
    <source>
    </source>
</evidence>
<evidence type="ECO:0000305" key="4"/>
<organism>
    <name type="scientific">Escherichia coli (strain K12)</name>
    <dbReference type="NCBI Taxonomy" id="83333"/>
    <lineage>
        <taxon>Bacteria</taxon>
        <taxon>Pseudomonadati</taxon>
        <taxon>Pseudomonadota</taxon>
        <taxon>Gammaproteobacteria</taxon>
        <taxon>Enterobacterales</taxon>
        <taxon>Enterobacteriaceae</taxon>
        <taxon>Escherichia</taxon>
    </lineage>
</organism>
<proteinExistence type="evidence at protein level"/>
<keyword id="KW-0281">Fimbrium</keyword>
<keyword id="KW-0472">Membrane</keyword>
<keyword id="KW-0488">Methylation</keyword>
<keyword id="KW-1185">Reference proteome</keyword>
<keyword id="KW-0812">Transmembrane</keyword>
<keyword id="KW-1133">Transmembrane helix</keyword>
<gene>
    <name type="primary">ppdD</name>
    <name type="ordered locus">b0108</name>
    <name type="ordered locus">JW0104</name>
</gene>
<protein>
    <recommendedName>
        <fullName>Prepilin peptidase-dependent protein D</fullName>
    </recommendedName>
</protein>
<sequence>MDKQRGFTLIELMVVIGIIAILSAIGIPAYQNYLRKAALTDMLQTFVPYRTAVELCALEHGGLDTCDGGSNGIPSPTTTRYVSAMSVAKGVVSLTGQESLNGLSVVMTPGWDNANGVTGWTRNCNIQSDSALQQACEDVFRFDDAN</sequence>
<name>PPDD_ECOLI</name>